<feature type="chain" id="PRO_0000049850" description="Magnesium transport protein CorA">
    <location>
        <begin position="1"/>
        <end position="317"/>
    </location>
</feature>
<feature type="transmembrane region" description="Helical" evidence="2">
    <location>
        <begin position="240"/>
        <end position="260"/>
    </location>
</feature>
<feature type="transmembrane region" description="Helical" evidence="2">
    <location>
        <begin position="272"/>
        <end position="292"/>
    </location>
</feature>
<feature type="short sequence motif" description="Probable selectivity filter" evidence="1">
    <location>
        <begin position="259"/>
        <end position="261"/>
    </location>
</feature>
<feature type="site" description="Essential for ion permeation" evidence="1">
    <location>
        <position position="235"/>
    </location>
</feature>
<feature type="site" description="Important for closing the ion permeation pathway in the closed state" evidence="1">
    <location>
        <position position="241"/>
    </location>
</feature>
<sequence length="317" mass="37708">MKAHTGKDWFWYQMGPQERSKARDLIHFSHWPQCEKWFENNHHVNFLRVDTTETENEAVFGSIVYDQGLGEEKDHTVFHFYITRQYFFTINFDFSILREIKGKEVVRQMERADNAIEGFLILLGELMNAYLIGVDEFEVKLRKLRWQIKDDNSKSILNRVHLLRHELMIWKNLILSAKKIEMALKETFLPQNEGKKDYQRTQLKIDRGFTYISEFEGELNNLLHSEEVITSHRGNEIVKALTIFTTLFTPITALGALWGMNFSVMPELNWKYGYLFSLLLIVTSTVLIYLYLRKKGWTGDMLQERKKKKKPRKRRTL</sequence>
<dbReference type="EMBL" id="D84432">
    <property type="protein sequence ID" value="BAA12532.1"/>
    <property type="molecule type" value="Genomic_DNA"/>
</dbReference>
<dbReference type="EMBL" id="AL009126">
    <property type="protein sequence ID" value="CAB14405.1"/>
    <property type="molecule type" value="Genomic_DNA"/>
</dbReference>
<dbReference type="EMBL" id="M29691">
    <property type="protein sequence ID" value="AAA83366.1"/>
    <property type="molecule type" value="Genomic_DNA"/>
</dbReference>
<dbReference type="PIR" id="F69968">
    <property type="entry name" value="F69968"/>
</dbReference>
<dbReference type="RefSeq" id="NP_390354.1">
    <property type="nucleotide sequence ID" value="NC_000964.3"/>
</dbReference>
<dbReference type="RefSeq" id="WP_004399136.1">
    <property type="nucleotide sequence ID" value="NZ_OZ025638.1"/>
</dbReference>
<dbReference type="SMR" id="P40948"/>
<dbReference type="FunCoup" id="P40948">
    <property type="interactions" value="51"/>
</dbReference>
<dbReference type="STRING" id="224308.BSU24740"/>
<dbReference type="TCDB" id="1.A.35.1.3">
    <property type="family name" value="the cora metal ion transporter (mit) family"/>
</dbReference>
<dbReference type="PaxDb" id="224308-BSU24740"/>
<dbReference type="EnsemblBacteria" id="CAB14405">
    <property type="protein sequence ID" value="CAB14405"/>
    <property type="gene ID" value="BSU_24740"/>
</dbReference>
<dbReference type="GeneID" id="938517"/>
<dbReference type="KEGG" id="bsu:BSU24740"/>
<dbReference type="PATRIC" id="fig|224308.179.peg.2693"/>
<dbReference type="eggNOG" id="COG0598">
    <property type="taxonomic scope" value="Bacteria"/>
</dbReference>
<dbReference type="InParanoid" id="P40948"/>
<dbReference type="OrthoDB" id="9803416at2"/>
<dbReference type="PhylomeDB" id="P40948"/>
<dbReference type="BioCyc" id="BSUB:BSU24740-MONOMER"/>
<dbReference type="Proteomes" id="UP000001570">
    <property type="component" value="Chromosome"/>
</dbReference>
<dbReference type="GO" id="GO:0005886">
    <property type="term" value="C:plasma membrane"/>
    <property type="evidence" value="ECO:0000318"/>
    <property type="project" value="GO_Central"/>
</dbReference>
<dbReference type="GO" id="GO:0050897">
    <property type="term" value="F:cobalt ion binding"/>
    <property type="evidence" value="ECO:0000318"/>
    <property type="project" value="GO_Central"/>
</dbReference>
<dbReference type="GO" id="GO:0015087">
    <property type="term" value="F:cobalt ion transmembrane transporter activity"/>
    <property type="evidence" value="ECO:0000318"/>
    <property type="project" value="GO_Central"/>
</dbReference>
<dbReference type="GO" id="GO:0000287">
    <property type="term" value="F:magnesium ion binding"/>
    <property type="evidence" value="ECO:0000318"/>
    <property type="project" value="GO_Central"/>
</dbReference>
<dbReference type="GO" id="GO:0015095">
    <property type="term" value="F:magnesium ion transmembrane transporter activity"/>
    <property type="evidence" value="ECO:0000318"/>
    <property type="project" value="GO_Central"/>
</dbReference>
<dbReference type="CDD" id="cd12821">
    <property type="entry name" value="EcCorA_ZntB-like"/>
    <property type="match status" value="1"/>
</dbReference>
<dbReference type="FunFam" id="1.20.58.340:FF:000004">
    <property type="entry name" value="Magnesium transport protein CorA"/>
    <property type="match status" value="1"/>
</dbReference>
<dbReference type="Gene3D" id="1.20.58.340">
    <property type="entry name" value="Magnesium transport protein CorA, transmembrane region"/>
    <property type="match status" value="1"/>
</dbReference>
<dbReference type="InterPro" id="IPR045861">
    <property type="entry name" value="CorA_cytoplasmic_dom"/>
</dbReference>
<dbReference type="InterPro" id="IPR045863">
    <property type="entry name" value="CorA_TM1_TM2"/>
</dbReference>
<dbReference type="InterPro" id="IPR002523">
    <property type="entry name" value="MgTranspt_CorA/ZnTranspt_ZntB"/>
</dbReference>
<dbReference type="PANTHER" id="PTHR46494">
    <property type="entry name" value="CORA FAMILY METAL ION TRANSPORTER (EUROFUNG)"/>
    <property type="match status" value="1"/>
</dbReference>
<dbReference type="PANTHER" id="PTHR46494:SF2">
    <property type="entry name" value="MAGNESIUM TRANSPORT PROTEIN CORA"/>
    <property type="match status" value="1"/>
</dbReference>
<dbReference type="Pfam" id="PF01544">
    <property type="entry name" value="CorA"/>
    <property type="match status" value="1"/>
</dbReference>
<dbReference type="SUPFAM" id="SSF143865">
    <property type="entry name" value="CorA soluble domain-like"/>
    <property type="match status" value="1"/>
</dbReference>
<dbReference type="SUPFAM" id="SSF144083">
    <property type="entry name" value="Magnesium transport protein CorA, transmembrane region"/>
    <property type="match status" value="1"/>
</dbReference>
<evidence type="ECO:0000250" key="1">
    <source>
        <dbReference type="UniProtKB" id="Q9WZ31"/>
    </source>
</evidence>
<evidence type="ECO:0000255" key="2"/>
<evidence type="ECO:0000269" key="3">
    <source>
    </source>
</evidence>
<evidence type="ECO:0000269" key="4">
    <source>
    </source>
</evidence>
<evidence type="ECO:0000305" key="5"/>
<evidence type="ECO:0000305" key="6">
    <source>
    </source>
</evidence>
<comment type="function">
    <text evidence="1">Mediates influx of magnesium ions. Alternates between open and closed states. Activated by low cytoplasmic Mg(2+) levels. Inactive when cytoplasmic Mg(2+) levels are high.</text>
</comment>
<comment type="catalytic activity">
    <reaction evidence="1">
        <text>Mg(2+)(in) = Mg(2+)(out)</text>
        <dbReference type="Rhea" id="RHEA:29827"/>
        <dbReference type="ChEBI" id="CHEBI:18420"/>
    </reaction>
</comment>
<comment type="subunit">
    <text evidence="1 6">Homopentamer. In the absence of Mg(2+), interactions between subunits are weakened, and dimers, trimers and tetramers can be observed in vitro (By similarity). Homotetramer (PubMed:15231793).</text>
</comment>
<comment type="subcellular location">
    <subcellularLocation>
        <location evidence="3">Cell membrane</location>
        <topology evidence="5">Multi-pass membrane protein</topology>
    </subcellularLocation>
</comment>
<comment type="induction">
    <text evidence="4">By secretion stress.</text>
</comment>
<comment type="domain">
    <text evidence="1">The central ion permeation pathway is formed by the first transmembrane domain from each of the five subunits. Mg(2+) binding strengthens interactions between subunits and leads to the formation of a symmetrical homopentamer surrounding a closed ion permeation pathway. Low Mg(2+) concentrations trigger both a conformation change within each subunit and a loosening of the interactions between subunits. This results in an open ion conduction pathway. In addition, this results in a less symmetrical shape of the whole complex.</text>
</comment>
<comment type="similarity">
    <text evidence="5">Belongs to the CorA metal ion transporter (MIT) (TC 1.A.35) family.</text>
</comment>
<gene>
    <name type="primary">corA</name>
    <name type="synonym">yqhC</name>
    <name type="synonym">yqxL</name>
    <name type="ordered locus">BSU24740</name>
</gene>
<proteinExistence type="evidence at protein level"/>
<name>CORA_BACSU</name>
<organism>
    <name type="scientific">Bacillus subtilis (strain 168)</name>
    <dbReference type="NCBI Taxonomy" id="224308"/>
    <lineage>
        <taxon>Bacteria</taxon>
        <taxon>Bacillati</taxon>
        <taxon>Bacillota</taxon>
        <taxon>Bacilli</taxon>
        <taxon>Bacillales</taxon>
        <taxon>Bacillaceae</taxon>
        <taxon>Bacillus</taxon>
    </lineage>
</organism>
<keyword id="KW-1003">Cell membrane</keyword>
<keyword id="KW-0406">Ion transport</keyword>
<keyword id="KW-0460">Magnesium</keyword>
<keyword id="KW-0472">Membrane</keyword>
<keyword id="KW-1185">Reference proteome</keyword>
<keyword id="KW-0812">Transmembrane</keyword>
<keyword id="KW-1133">Transmembrane helix</keyword>
<keyword id="KW-0813">Transport</keyword>
<accession>P40948</accession>
<protein>
    <recommendedName>
        <fullName>Magnesium transport protein CorA</fullName>
    </recommendedName>
</protein>
<reference key="1">
    <citation type="journal article" date="1996" name="Microbiology">
        <title>Systematic sequencing of the 283 kb 210 degrees-232 degrees region of the Bacillus subtilis genome containing the skin element and many sporulation genes.</title>
        <authorList>
            <person name="Mizuno M."/>
            <person name="Masuda S."/>
            <person name="Takemaru K."/>
            <person name="Hosono S."/>
            <person name="Sato T."/>
            <person name="Takeuchi M."/>
            <person name="Kobayashi Y."/>
        </authorList>
    </citation>
    <scope>NUCLEOTIDE SEQUENCE [GENOMIC DNA]</scope>
    <source>
        <strain>168 / JH642</strain>
    </source>
</reference>
<reference key="2">
    <citation type="journal article" date="1997" name="Nature">
        <title>The complete genome sequence of the Gram-positive bacterium Bacillus subtilis.</title>
        <authorList>
            <person name="Kunst F."/>
            <person name="Ogasawara N."/>
            <person name="Moszer I."/>
            <person name="Albertini A.M."/>
            <person name="Alloni G."/>
            <person name="Azevedo V."/>
            <person name="Bertero M.G."/>
            <person name="Bessieres P."/>
            <person name="Bolotin A."/>
            <person name="Borchert S."/>
            <person name="Borriss R."/>
            <person name="Boursier L."/>
            <person name="Brans A."/>
            <person name="Braun M."/>
            <person name="Brignell S.C."/>
            <person name="Bron S."/>
            <person name="Brouillet S."/>
            <person name="Bruschi C.V."/>
            <person name="Caldwell B."/>
            <person name="Capuano V."/>
            <person name="Carter N.M."/>
            <person name="Choi S.-K."/>
            <person name="Codani J.-J."/>
            <person name="Connerton I.F."/>
            <person name="Cummings N.J."/>
            <person name="Daniel R.A."/>
            <person name="Denizot F."/>
            <person name="Devine K.M."/>
            <person name="Duesterhoeft A."/>
            <person name="Ehrlich S.D."/>
            <person name="Emmerson P.T."/>
            <person name="Entian K.-D."/>
            <person name="Errington J."/>
            <person name="Fabret C."/>
            <person name="Ferrari E."/>
            <person name="Foulger D."/>
            <person name="Fritz C."/>
            <person name="Fujita M."/>
            <person name="Fujita Y."/>
            <person name="Fuma S."/>
            <person name="Galizzi A."/>
            <person name="Galleron N."/>
            <person name="Ghim S.-Y."/>
            <person name="Glaser P."/>
            <person name="Goffeau A."/>
            <person name="Golightly E.J."/>
            <person name="Grandi G."/>
            <person name="Guiseppi G."/>
            <person name="Guy B.J."/>
            <person name="Haga K."/>
            <person name="Haiech J."/>
            <person name="Harwood C.R."/>
            <person name="Henaut A."/>
            <person name="Hilbert H."/>
            <person name="Holsappel S."/>
            <person name="Hosono S."/>
            <person name="Hullo M.-F."/>
            <person name="Itaya M."/>
            <person name="Jones L.-M."/>
            <person name="Joris B."/>
            <person name="Karamata D."/>
            <person name="Kasahara Y."/>
            <person name="Klaerr-Blanchard M."/>
            <person name="Klein C."/>
            <person name="Kobayashi Y."/>
            <person name="Koetter P."/>
            <person name="Koningstein G."/>
            <person name="Krogh S."/>
            <person name="Kumano M."/>
            <person name="Kurita K."/>
            <person name="Lapidus A."/>
            <person name="Lardinois S."/>
            <person name="Lauber J."/>
            <person name="Lazarevic V."/>
            <person name="Lee S.-M."/>
            <person name="Levine A."/>
            <person name="Liu H."/>
            <person name="Masuda S."/>
            <person name="Mauel C."/>
            <person name="Medigue C."/>
            <person name="Medina N."/>
            <person name="Mellado R.P."/>
            <person name="Mizuno M."/>
            <person name="Moestl D."/>
            <person name="Nakai S."/>
            <person name="Noback M."/>
            <person name="Noone D."/>
            <person name="O'Reilly M."/>
            <person name="Ogawa K."/>
            <person name="Ogiwara A."/>
            <person name="Oudega B."/>
            <person name="Park S.-H."/>
            <person name="Parro V."/>
            <person name="Pohl T.M."/>
            <person name="Portetelle D."/>
            <person name="Porwollik S."/>
            <person name="Prescott A.M."/>
            <person name="Presecan E."/>
            <person name="Pujic P."/>
            <person name="Purnelle B."/>
            <person name="Rapoport G."/>
            <person name="Rey M."/>
            <person name="Reynolds S."/>
            <person name="Rieger M."/>
            <person name="Rivolta C."/>
            <person name="Rocha E."/>
            <person name="Roche B."/>
            <person name="Rose M."/>
            <person name="Sadaie Y."/>
            <person name="Sato T."/>
            <person name="Scanlan E."/>
            <person name="Schleich S."/>
            <person name="Schroeter R."/>
            <person name="Scoffone F."/>
            <person name="Sekiguchi J."/>
            <person name="Sekowska A."/>
            <person name="Seror S.J."/>
            <person name="Serror P."/>
            <person name="Shin B.-S."/>
            <person name="Soldo B."/>
            <person name="Sorokin A."/>
            <person name="Tacconi E."/>
            <person name="Takagi T."/>
            <person name="Takahashi H."/>
            <person name="Takemaru K."/>
            <person name="Takeuchi M."/>
            <person name="Tamakoshi A."/>
            <person name="Tanaka T."/>
            <person name="Terpstra P."/>
            <person name="Tognoni A."/>
            <person name="Tosato V."/>
            <person name="Uchiyama S."/>
            <person name="Vandenbol M."/>
            <person name="Vannier F."/>
            <person name="Vassarotti A."/>
            <person name="Viari A."/>
            <person name="Wambutt R."/>
            <person name="Wedler E."/>
            <person name="Wedler H."/>
            <person name="Weitzenegger T."/>
            <person name="Winters P."/>
            <person name="Wipat A."/>
            <person name="Yamamoto H."/>
            <person name="Yamane K."/>
            <person name="Yasumoto K."/>
            <person name="Yata K."/>
            <person name="Yoshida K."/>
            <person name="Yoshikawa H.-F."/>
            <person name="Zumstein E."/>
            <person name="Yoshikawa H."/>
            <person name="Danchin A."/>
        </authorList>
    </citation>
    <scope>NUCLEOTIDE SEQUENCE [LARGE SCALE GENOMIC DNA]</scope>
    <source>
        <strain>168</strain>
    </source>
</reference>
<reference key="3">
    <citation type="journal article" date="1989" name="J. Bacteriol.">
        <title>Nucleotide sequence and genetic organization of the Bacillus subtilis comG operon.</title>
        <authorList>
            <person name="Albano M."/>
            <person name="Breitling R."/>
            <person name="Dubnau D.A."/>
        </authorList>
    </citation>
    <scope>NUCLEOTIDE SEQUENCE [GENOMIC DNA] OF 24-317</scope>
</reference>
<reference key="4">
    <citation type="journal article" date="2004" name="J. Bacteriol.">
        <title>The CorA Mg2+ transporter is a homotetramer.</title>
        <authorList>
            <person name="Warren M.A."/>
            <person name="Kucharski L.M."/>
            <person name="Veenstra A."/>
            <person name="Shi L."/>
            <person name="Grulich P.F."/>
            <person name="Maguire M.E."/>
        </authorList>
    </citation>
    <scope>SUBUNIT</scope>
    <scope>SUBCELLULAR LOCATION</scope>
</reference>
<reference key="5">
    <citation type="journal article" date="2005" name="Appl. Microbiol. Biotechnol.">
        <title>Transcriptome analysis of the secretion stress response of Bacillus subtilis.</title>
        <authorList>
            <person name="Hyyrylaeinen H.-L."/>
            <person name="Sarvas M."/>
            <person name="Kontinen V.P."/>
        </authorList>
    </citation>
    <scope>INDUCTION</scope>
</reference>